<feature type="chain" id="PRO_1000020446" description="Threonine--tRNA ligase">
    <location>
        <begin position="1"/>
        <end position="691"/>
    </location>
</feature>
<feature type="domain" description="TGS" evidence="2">
    <location>
        <begin position="1"/>
        <end position="66"/>
    </location>
</feature>
<feature type="region of interest" description="Catalytic" evidence="1">
    <location>
        <begin position="265"/>
        <end position="571"/>
    </location>
</feature>
<feature type="binding site" evidence="1">
    <location>
        <position position="370"/>
    </location>
    <ligand>
        <name>Zn(2+)</name>
        <dbReference type="ChEBI" id="CHEBI:29105"/>
    </ligand>
</feature>
<feature type="binding site" evidence="1">
    <location>
        <position position="421"/>
    </location>
    <ligand>
        <name>Zn(2+)</name>
        <dbReference type="ChEBI" id="CHEBI:29105"/>
    </ligand>
</feature>
<feature type="binding site" evidence="1">
    <location>
        <position position="548"/>
    </location>
    <ligand>
        <name>Zn(2+)</name>
        <dbReference type="ChEBI" id="CHEBI:29105"/>
    </ligand>
</feature>
<dbReference type="EC" id="6.1.1.3" evidence="1"/>
<dbReference type="EMBL" id="CP000511">
    <property type="protein sequence ID" value="ABM13368.1"/>
    <property type="molecule type" value="Genomic_DNA"/>
</dbReference>
<dbReference type="RefSeq" id="WP_011779777.1">
    <property type="nucleotide sequence ID" value="NC_008726.1"/>
</dbReference>
<dbReference type="SMR" id="A1T868"/>
<dbReference type="STRING" id="350058.Mvan_2558"/>
<dbReference type="KEGG" id="mva:Mvan_2558"/>
<dbReference type="eggNOG" id="COG0441">
    <property type="taxonomic scope" value="Bacteria"/>
</dbReference>
<dbReference type="HOGENOM" id="CLU_008554_0_1_11"/>
<dbReference type="Proteomes" id="UP000009159">
    <property type="component" value="Chromosome"/>
</dbReference>
<dbReference type="GO" id="GO:0005737">
    <property type="term" value="C:cytoplasm"/>
    <property type="evidence" value="ECO:0007669"/>
    <property type="project" value="UniProtKB-SubCell"/>
</dbReference>
<dbReference type="GO" id="GO:0005524">
    <property type="term" value="F:ATP binding"/>
    <property type="evidence" value="ECO:0007669"/>
    <property type="project" value="UniProtKB-UniRule"/>
</dbReference>
<dbReference type="GO" id="GO:0046872">
    <property type="term" value="F:metal ion binding"/>
    <property type="evidence" value="ECO:0007669"/>
    <property type="project" value="UniProtKB-KW"/>
</dbReference>
<dbReference type="GO" id="GO:0004829">
    <property type="term" value="F:threonine-tRNA ligase activity"/>
    <property type="evidence" value="ECO:0007669"/>
    <property type="project" value="UniProtKB-UniRule"/>
</dbReference>
<dbReference type="GO" id="GO:0000049">
    <property type="term" value="F:tRNA binding"/>
    <property type="evidence" value="ECO:0007669"/>
    <property type="project" value="UniProtKB-KW"/>
</dbReference>
<dbReference type="GO" id="GO:0006435">
    <property type="term" value="P:threonyl-tRNA aminoacylation"/>
    <property type="evidence" value="ECO:0007669"/>
    <property type="project" value="UniProtKB-UniRule"/>
</dbReference>
<dbReference type="CDD" id="cd00860">
    <property type="entry name" value="ThrRS_anticodon"/>
    <property type="match status" value="1"/>
</dbReference>
<dbReference type="CDD" id="cd00771">
    <property type="entry name" value="ThrRS_core"/>
    <property type="match status" value="1"/>
</dbReference>
<dbReference type="FunFam" id="3.30.54.20:FF:000003">
    <property type="entry name" value="Threonine--tRNA ligase"/>
    <property type="match status" value="1"/>
</dbReference>
<dbReference type="FunFam" id="3.30.930.10:FF:000019">
    <property type="entry name" value="Threonine--tRNA ligase"/>
    <property type="match status" value="1"/>
</dbReference>
<dbReference type="FunFam" id="3.40.50.800:FF:000001">
    <property type="entry name" value="Threonine--tRNA ligase"/>
    <property type="match status" value="1"/>
</dbReference>
<dbReference type="FunFam" id="3.30.980.10:FF:000005">
    <property type="entry name" value="Threonyl-tRNA synthetase, mitochondrial"/>
    <property type="match status" value="1"/>
</dbReference>
<dbReference type="Gene3D" id="3.30.54.20">
    <property type="match status" value="1"/>
</dbReference>
<dbReference type="Gene3D" id="3.40.50.800">
    <property type="entry name" value="Anticodon-binding domain"/>
    <property type="match status" value="1"/>
</dbReference>
<dbReference type="Gene3D" id="3.30.930.10">
    <property type="entry name" value="Bira Bifunctional Protein, Domain 2"/>
    <property type="match status" value="1"/>
</dbReference>
<dbReference type="Gene3D" id="3.30.980.10">
    <property type="entry name" value="Threonyl-trna Synthetase, Chain A, domain 2"/>
    <property type="match status" value="1"/>
</dbReference>
<dbReference type="HAMAP" id="MF_00184">
    <property type="entry name" value="Thr_tRNA_synth"/>
    <property type="match status" value="1"/>
</dbReference>
<dbReference type="InterPro" id="IPR002314">
    <property type="entry name" value="aa-tRNA-synt_IIb"/>
</dbReference>
<dbReference type="InterPro" id="IPR006195">
    <property type="entry name" value="aa-tRNA-synth_II"/>
</dbReference>
<dbReference type="InterPro" id="IPR045864">
    <property type="entry name" value="aa-tRNA-synth_II/BPL/LPL"/>
</dbReference>
<dbReference type="InterPro" id="IPR004154">
    <property type="entry name" value="Anticodon-bd"/>
</dbReference>
<dbReference type="InterPro" id="IPR036621">
    <property type="entry name" value="Anticodon-bd_dom_sf"/>
</dbReference>
<dbReference type="InterPro" id="IPR004095">
    <property type="entry name" value="TGS"/>
</dbReference>
<dbReference type="InterPro" id="IPR002320">
    <property type="entry name" value="Thr-tRNA-ligase_IIa"/>
</dbReference>
<dbReference type="InterPro" id="IPR018163">
    <property type="entry name" value="Thr/Ala-tRNA-synth_IIc_edit"/>
</dbReference>
<dbReference type="InterPro" id="IPR047246">
    <property type="entry name" value="ThrRS_anticodon"/>
</dbReference>
<dbReference type="InterPro" id="IPR033728">
    <property type="entry name" value="ThrRS_core"/>
</dbReference>
<dbReference type="InterPro" id="IPR012947">
    <property type="entry name" value="tRNA_SAD"/>
</dbReference>
<dbReference type="NCBIfam" id="TIGR00418">
    <property type="entry name" value="thrS"/>
    <property type="match status" value="1"/>
</dbReference>
<dbReference type="PANTHER" id="PTHR11451:SF44">
    <property type="entry name" value="THREONINE--TRNA LIGASE, CHLOROPLASTIC_MITOCHONDRIAL 2"/>
    <property type="match status" value="1"/>
</dbReference>
<dbReference type="PANTHER" id="PTHR11451">
    <property type="entry name" value="THREONINE-TRNA LIGASE"/>
    <property type="match status" value="1"/>
</dbReference>
<dbReference type="Pfam" id="PF03129">
    <property type="entry name" value="HGTP_anticodon"/>
    <property type="match status" value="1"/>
</dbReference>
<dbReference type="Pfam" id="PF00587">
    <property type="entry name" value="tRNA-synt_2b"/>
    <property type="match status" value="1"/>
</dbReference>
<dbReference type="Pfam" id="PF07973">
    <property type="entry name" value="tRNA_SAD"/>
    <property type="match status" value="1"/>
</dbReference>
<dbReference type="PRINTS" id="PR01047">
    <property type="entry name" value="TRNASYNTHTHR"/>
</dbReference>
<dbReference type="SMART" id="SM00863">
    <property type="entry name" value="tRNA_SAD"/>
    <property type="match status" value="1"/>
</dbReference>
<dbReference type="SUPFAM" id="SSF52954">
    <property type="entry name" value="Class II aaRS ABD-related"/>
    <property type="match status" value="1"/>
</dbReference>
<dbReference type="SUPFAM" id="SSF55681">
    <property type="entry name" value="Class II aaRS and biotin synthetases"/>
    <property type="match status" value="1"/>
</dbReference>
<dbReference type="SUPFAM" id="SSF55186">
    <property type="entry name" value="ThrRS/AlaRS common domain"/>
    <property type="match status" value="1"/>
</dbReference>
<dbReference type="PROSITE" id="PS50862">
    <property type="entry name" value="AA_TRNA_LIGASE_II"/>
    <property type="match status" value="1"/>
</dbReference>
<dbReference type="PROSITE" id="PS51880">
    <property type="entry name" value="TGS"/>
    <property type="match status" value="1"/>
</dbReference>
<proteinExistence type="inferred from homology"/>
<comment type="function">
    <text evidence="1">Catalyzes the attachment of threonine to tRNA(Thr) in a two-step reaction: L-threonine is first activated by ATP to form Thr-AMP and then transferred to the acceptor end of tRNA(Thr). Also edits incorrectly charged L-seryl-tRNA(Thr).</text>
</comment>
<comment type="catalytic activity">
    <reaction evidence="1">
        <text>tRNA(Thr) + L-threonine + ATP = L-threonyl-tRNA(Thr) + AMP + diphosphate + H(+)</text>
        <dbReference type="Rhea" id="RHEA:24624"/>
        <dbReference type="Rhea" id="RHEA-COMP:9670"/>
        <dbReference type="Rhea" id="RHEA-COMP:9704"/>
        <dbReference type="ChEBI" id="CHEBI:15378"/>
        <dbReference type="ChEBI" id="CHEBI:30616"/>
        <dbReference type="ChEBI" id="CHEBI:33019"/>
        <dbReference type="ChEBI" id="CHEBI:57926"/>
        <dbReference type="ChEBI" id="CHEBI:78442"/>
        <dbReference type="ChEBI" id="CHEBI:78534"/>
        <dbReference type="ChEBI" id="CHEBI:456215"/>
        <dbReference type="EC" id="6.1.1.3"/>
    </reaction>
</comment>
<comment type="cofactor">
    <cofactor evidence="1">
        <name>Zn(2+)</name>
        <dbReference type="ChEBI" id="CHEBI:29105"/>
    </cofactor>
    <text evidence="1">Binds 1 zinc ion per subunit.</text>
</comment>
<comment type="subunit">
    <text evidence="1">Homodimer.</text>
</comment>
<comment type="subcellular location">
    <subcellularLocation>
        <location evidence="1">Cytoplasm</location>
    </subcellularLocation>
</comment>
<comment type="similarity">
    <text evidence="1">Belongs to the class-II aminoacyl-tRNA synthetase family.</text>
</comment>
<gene>
    <name evidence="1" type="primary">thrS</name>
    <name type="ordered locus">Mvan_2558</name>
</gene>
<protein>
    <recommendedName>
        <fullName evidence="1">Threonine--tRNA ligase</fullName>
        <ecNumber evidence="1">6.1.1.3</ecNumber>
    </recommendedName>
    <alternativeName>
        <fullName evidence="1">Threonyl-tRNA synthetase</fullName>
        <shortName evidence="1">ThrRS</shortName>
    </alternativeName>
</protein>
<sequence>MSAPARPAPAAPIRVAAGTTAGQAVRDAGLPSRGAPDAVVVVQDPDGRLRDLSWVPDADVDVIPVTADTEDGRSVIRHSAAHVLAQAVQALFPDAKLGIGPPITDGFYYDFEVAEPFTPEDLEALEKRMRQIVKDGQLFSRRVFESKDEAREELANEPYKLELIDDKSGDLESSDEIMEIGGDELTAYDNLNPRTRERVWGDLCRGPHIPTTRYIPAFKLTRSSAAYWRGDQNNASLQRIYGTAWESQEALDRHLELIEEAQKRDHRKLGVELDLFSFPDELGSGLPVFHPKGGVVRRELEEYSRRKHIEAGYEFVNTPHITKEHLYITSGHLEWYADGMFPAMHIDAEYNDDGTVRKPGQDYYLKPMNCPMHHLIYRSRGRSYRELPLRLFEFGSVYRYEKSGVVHGLTRVRGMTQDDAHIYCTREEMRDELARLLQFVLDLLADYGLDDFYLELSTKDPDKFVGSDDMWEEATETLREVAESSGLHLVPDPGGAAFYGPKISVQVRDALGRNWQMSTIQLDFNMPDRFELEYTAADGTRKRPVLIHRALFGSIERFFGVLTEHYAGAFPAWLAPVQVVGIPVADDHIRYLDGLVAQLRALGIRAEVDTSDDRMAKKIVNHTNQKVPFMLLAGDRDVEAEAVSFRFGDRTQVNGVPREQAVAAIVDWVTRRENATPTAELVEISAETGEG</sequence>
<keyword id="KW-0030">Aminoacyl-tRNA synthetase</keyword>
<keyword id="KW-0067">ATP-binding</keyword>
<keyword id="KW-0963">Cytoplasm</keyword>
<keyword id="KW-0436">Ligase</keyword>
<keyword id="KW-0479">Metal-binding</keyword>
<keyword id="KW-0547">Nucleotide-binding</keyword>
<keyword id="KW-0648">Protein biosynthesis</keyword>
<keyword id="KW-0694">RNA-binding</keyword>
<keyword id="KW-0820">tRNA-binding</keyword>
<keyword id="KW-0862">Zinc</keyword>
<organism>
    <name type="scientific">Mycolicibacterium vanbaalenii (strain DSM 7251 / JCM 13017 / BCRC 16820 / KCTC 9966 / NRRL B-24157 / PYR-1)</name>
    <name type="common">Mycobacterium vanbaalenii</name>
    <dbReference type="NCBI Taxonomy" id="350058"/>
    <lineage>
        <taxon>Bacteria</taxon>
        <taxon>Bacillati</taxon>
        <taxon>Actinomycetota</taxon>
        <taxon>Actinomycetes</taxon>
        <taxon>Mycobacteriales</taxon>
        <taxon>Mycobacteriaceae</taxon>
        <taxon>Mycolicibacterium</taxon>
    </lineage>
</organism>
<name>SYT_MYCVP</name>
<reference key="1">
    <citation type="submission" date="2006-12" db="EMBL/GenBank/DDBJ databases">
        <title>Complete sequence of Mycobacterium vanbaalenii PYR-1.</title>
        <authorList>
            <consortium name="US DOE Joint Genome Institute"/>
            <person name="Copeland A."/>
            <person name="Lucas S."/>
            <person name="Lapidus A."/>
            <person name="Barry K."/>
            <person name="Detter J.C."/>
            <person name="Glavina del Rio T."/>
            <person name="Hammon N."/>
            <person name="Israni S."/>
            <person name="Dalin E."/>
            <person name="Tice H."/>
            <person name="Pitluck S."/>
            <person name="Singan V."/>
            <person name="Schmutz J."/>
            <person name="Larimer F."/>
            <person name="Land M."/>
            <person name="Hauser L."/>
            <person name="Kyrpides N."/>
            <person name="Anderson I.J."/>
            <person name="Miller C."/>
            <person name="Richardson P."/>
        </authorList>
    </citation>
    <scope>NUCLEOTIDE SEQUENCE [LARGE SCALE GENOMIC DNA]</scope>
    <source>
        <strain>DSM 7251 / JCM 13017 / BCRC 16820 / KCTC 9966 / NRRL B-24157 / PYR-1</strain>
    </source>
</reference>
<evidence type="ECO:0000255" key="1">
    <source>
        <dbReference type="HAMAP-Rule" id="MF_00184"/>
    </source>
</evidence>
<evidence type="ECO:0000255" key="2">
    <source>
        <dbReference type="PROSITE-ProRule" id="PRU01228"/>
    </source>
</evidence>
<accession>A1T868</accession>